<comment type="function">
    <text evidence="1">Binds to DNA and alters its conformation. May be involved in regulation of gene expression, nucleoid organization and DNA protection.</text>
</comment>
<comment type="subunit">
    <text evidence="1">Homodimer.</text>
</comment>
<comment type="subcellular location">
    <subcellularLocation>
        <location evidence="1">Cytoplasm</location>
        <location evidence="1">Nucleoid</location>
    </subcellularLocation>
</comment>
<comment type="similarity">
    <text evidence="1">Belongs to the YbaB/EbfC family.</text>
</comment>
<keyword id="KW-0963">Cytoplasm</keyword>
<keyword id="KW-0238">DNA-binding</keyword>
<keyword id="KW-1185">Reference proteome</keyword>
<accession>A4F6D0</accession>
<name>Y254_SACEN</name>
<sequence>MQPGGQPNMQQIMEQAQKMQQQLMTAQQELAEAEVSGSAGGGLVTAVVSGSGELKSVAIDPKAVDPDDTDTLSDLVVAAVRDANRAAQELQQEKMGPVTGALGGGQGLGGLGLPGL</sequence>
<gene>
    <name type="ordered locus">SACE_0254</name>
</gene>
<dbReference type="EMBL" id="AM420293">
    <property type="protein sequence ID" value="CAL99604.1"/>
    <property type="molecule type" value="Genomic_DNA"/>
</dbReference>
<dbReference type="RefSeq" id="WP_011872989.1">
    <property type="nucleotide sequence ID" value="NZ_PDBV01000001.1"/>
</dbReference>
<dbReference type="SMR" id="A4F6D0"/>
<dbReference type="STRING" id="405948.SACE_0254"/>
<dbReference type="KEGG" id="sen:SACE_0254"/>
<dbReference type="eggNOG" id="COG0718">
    <property type="taxonomic scope" value="Bacteria"/>
</dbReference>
<dbReference type="HOGENOM" id="CLU_140930_4_0_11"/>
<dbReference type="OrthoDB" id="9809370at2"/>
<dbReference type="Proteomes" id="UP000006728">
    <property type="component" value="Chromosome"/>
</dbReference>
<dbReference type="GO" id="GO:0043590">
    <property type="term" value="C:bacterial nucleoid"/>
    <property type="evidence" value="ECO:0007669"/>
    <property type="project" value="UniProtKB-UniRule"/>
</dbReference>
<dbReference type="GO" id="GO:0005829">
    <property type="term" value="C:cytosol"/>
    <property type="evidence" value="ECO:0007669"/>
    <property type="project" value="TreeGrafter"/>
</dbReference>
<dbReference type="GO" id="GO:0003677">
    <property type="term" value="F:DNA binding"/>
    <property type="evidence" value="ECO:0007669"/>
    <property type="project" value="UniProtKB-UniRule"/>
</dbReference>
<dbReference type="FunFam" id="3.30.1310.10:FF:000003">
    <property type="entry name" value="Nucleoid-associated protein MRA_3753"/>
    <property type="match status" value="1"/>
</dbReference>
<dbReference type="Gene3D" id="3.30.1310.10">
    <property type="entry name" value="Nucleoid-associated protein YbaB-like domain"/>
    <property type="match status" value="1"/>
</dbReference>
<dbReference type="HAMAP" id="MF_00274">
    <property type="entry name" value="DNA_YbaB_EbfC"/>
    <property type="match status" value="1"/>
</dbReference>
<dbReference type="InterPro" id="IPR036894">
    <property type="entry name" value="YbaB-like_sf"/>
</dbReference>
<dbReference type="InterPro" id="IPR004401">
    <property type="entry name" value="YbaB/EbfC"/>
</dbReference>
<dbReference type="NCBIfam" id="TIGR00103">
    <property type="entry name" value="DNA_YbaB_EbfC"/>
    <property type="match status" value="1"/>
</dbReference>
<dbReference type="PANTHER" id="PTHR33449">
    <property type="entry name" value="NUCLEOID-ASSOCIATED PROTEIN YBAB"/>
    <property type="match status" value="1"/>
</dbReference>
<dbReference type="PANTHER" id="PTHR33449:SF1">
    <property type="entry name" value="NUCLEOID-ASSOCIATED PROTEIN YBAB"/>
    <property type="match status" value="1"/>
</dbReference>
<dbReference type="Pfam" id="PF02575">
    <property type="entry name" value="YbaB_DNA_bd"/>
    <property type="match status" value="1"/>
</dbReference>
<dbReference type="PIRSF" id="PIRSF004555">
    <property type="entry name" value="UCP004555"/>
    <property type="match status" value="1"/>
</dbReference>
<dbReference type="SUPFAM" id="SSF82607">
    <property type="entry name" value="YbaB-like"/>
    <property type="match status" value="1"/>
</dbReference>
<organism>
    <name type="scientific">Saccharopolyspora erythraea (strain ATCC 11635 / DSM 40517 / JCM 4748 / NBRC 13426 / NCIMB 8594 / NRRL 2338)</name>
    <dbReference type="NCBI Taxonomy" id="405948"/>
    <lineage>
        <taxon>Bacteria</taxon>
        <taxon>Bacillati</taxon>
        <taxon>Actinomycetota</taxon>
        <taxon>Actinomycetes</taxon>
        <taxon>Pseudonocardiales</taxon>
        <taxon>Pseudonocardiaceae</taxon>
        <taxon>Saccharopolyspora</taxon>
    </lineage>
</organism>
<protein>
    <recommendedName>
        <fullName evidence="1">Nucleoid-associated protein SACE_0254</fullName>
    </recommendedName>
</protein>
<feature type="chain" id="PRO_1000197673" description="Nucleoid-associated protein SACE_0254">
    <location>
        <begin position="1"/>
        <end position="116"/>
    </location>
</feature>
<feature type="region of interest" description="Disordered" evidence="2">
    <location>
        <begin position="90"/>
        <end position="116"/>
    </location>
</feature>
<feature type="compositionally biased region" description="Gly residues" evidence="2">
    <location>
        <begin position="101"/>
        <end position="116"/>
    </location>
</feature>
<reference key="1">
    <citation type="journal article" date="2007" name="Nat. Biotechnol.">
        <title>Complete genome sequence of the erythromycin-producing bacterium Saccharopolyspora erythraea NRRL23338.</title>
        <authorList>
            <person name="Oliynyk M."/>
            <person name="Samborskyy M."/>
            <person name="Lester J.B."/>
            <person name="Mironenko T."/>
            <person name="Scott N."/>
            <person name="Dickens S."/>
            <person name="Haydock S.F."/>
            <person name="Leadlay P.F."/>
        </authorList>
    </citation>
    <scope>NUCLEOTIDE SEQUENCE [LARGE SCALE GENOMIC DNA]</scope>
    <source>
        <strain>ATCC 11635 / DSM 40517 / JCM 4748 / NBRC 13426 / NCIMB 8594 / NRRL 2338</strain>
    </source>
</reference>
<proteinExistence type="inferred from homology"/>
<evidence type="ECO:0000255" key="1">
    <source>
        <dbReference type="HAMAP-Rule" id="MF_00274"/>
    </source>
</evidence>
<evidence type="ECO:0000256" key="2">
    <source>
        <dbReference type="SAM" id="MobiDB-lite"/>
    </source>
</evidence>